<dbReference type="EMBL" id="X17615">
    <property type="protein sequence ID" value="CAA35616.1"/>
    <property type="molecule type" value="Genomic_DNA"/>
</dbReference>
<dbReference type="EMBL" id="U00096">
    <property type="protein sequence ID" value="AAC74186.1"/>
    <property type="molecule type" value="Genomic_DNA"/>
</dbReference>
<dbReference type="EMBL" id="AP009048">
    <property type="protein sequence ID" value="BAA35909.1"/>
    <property type="molecule type" value="Genomic_DNA"/>
</dbReference>
<dbReference type="PIR" id="C64854">
    <property type="entry name" value="C64854"/>
</dbReference>
<dbReference type="RefSeq" id="NP_415620.1">
    <property type="nucleotide sequence ID" value="NC_000913.3"/>
</dbReference>
<dbReference type="RefSeq" id="WP_000953441.1">
    <property type="nucleotide sequence ID" value="NZ_SSZK01000019.1"/>
</dbReference>
<dbReference type="PDB" id="6E4V">
    <property type="method" value="X-ray"/>
    <property type="resolution" value="2.00 A"/>
    <property type="chains" value="A=37-729"/>
</dbReference>
<dbReference type="PDBsum" id="6E4V"/>
<dbReference type="SMR" id="P16869"/>
<dbReference type="BioGRID" id="4260942">
    <property type="interactions" value="181"/>
</dbReference>
<dbReference type="ComplexPortal" id="CPX-3579">
    <property type="entry name" value="Ferric-coprogen outer membrane transporter complex"/>
</dbReference>
<dbReference type="FunCoup" id="P16869">
    <property type="interactions" value="16"/>
</dbReference>
<dbReference type="STRING" id="511145.b1102"/>
<dbReference type="TCDB" id="1.B.14.1.1">
    <property type="family name" value="the outer membrane receptor (omr) family"/>
</dbReference>
<dbReference type="PaxDb" id="511145-b1102"/>
<dbReference type="EnsemblBacteria" id="AAC74186">
    <property type="protein sequence ID" value="AAC74186"/>
    <property type="gene ID" value="b1102"/>
</dbReference>
<dbReference type="GeneID" id="945649"/>
<dbReference type="KEGG" id="ecj:JW1088"/>
<dbReference type="KEGG" id="eco:b1102"/>
<dbReference type="KEGG" id="ecoc:C3026_06655"/>
<dbReference type="PATRIC" id="fig|1411691.4.peg.1166"/>
<dbReference type="EchoBASE" id="EB0302"/>
<dbReference type="eggNOG" id="COG4773">
    <property type="taxonomic scope" value="Bacteria"/>
</dbReference>
<dbReference type="HOGENOM" id="CLU_008287_9_3_6"/>
<dbReference type="InParanoid" id="P16869"/>
<dbReference type="OMA" id="GPAGFMM"/>
<dbReference type="OrthoDB" id="8663017at2"/>
<dbReference type="PhylomeDB" id="P16869"/>
<dbReference type="BioCyc" id="EcoCyc:EG10306-MONOMER"/>
<dbReference type="BioCyc" id="MetaCyc:EG10306-MONOMER"/>
<dbReference type="PRO" id="PR:P16869"/>
<dbReference type="Proteomes" id="UP000000625">
    <property type="component" value="Chromosome"/>
</dbReference>
<dbReference type="GO" id="GO:0009279">
    <property type="term" value="C:cell outer membrane"/>
    <property type="evidence" value="ECO:0000314"/>
    <property type="project" value="UniProtKB"/>
</dbReference>
<dbReference type="GO" id="GO:0016020">
    <property type="term" value="C:membrane"/>
    <property type="evidence" value="ECO:0000303"/>
    <property type="project" value="ComplexPortal"/>
</dbReference>
<dbReference type="GO" id="GO:1902495">
    <property type="term" value="C:transmembrane transporter complex"/>
    <property type="evidence" value="ECO:0000303"/>
    <property type="project" value="ComplexPortal"/>
</dbReference>
<dbReference type="GO" id="GO:0015092">
    <property type="term" value="F:high-affinity ferric iron transmembrane transporter activity"/>
    <property type="evidence" value="ECO:0000315"/>
    <property type="project" value="UniProtKB"/>
</dbReference>
<dbReference type="GO" id="GO:0015344">
    <property type="term" value="F:siderophore uptake transmembrane transporter activity"/>
    <property type="evidence" value="ECO:0000318"/>
    <property type="project" value="GO_Central"/>
</dbReference>
<dbReference type="GO" id="GO:0015343">
    <property type="term" value="F:siderophore-iron transmembrane transporter activity"/>
    <property type="evidence" value="ECO:0000315"/>
    <property type="project" value="UniProtKB"/>
</dbReference>
<dbReference type="GO" id="GO:0038023">
    <property type="term" value="F:signaling receptor activity"/>
    <property type="evidence" value="ECO:0007669"/>
    <property type="project" value="InterPro"/>
</dbReference>
<dbReference type="GO" id="GO:0072711">
    <property type="term" value="P:cellular response to hydroxyurea"/>
    <property type="evidence" value="ECO:0000270"/>
    <property type="project" value="UniProtKB"/>
</dbReference>
<dbReference type="GO" id="GO:0015687">
    <property type="term" value="P:ferric-hydroxamate import into cell"/>
    <property type="evidence" value="ECO:0000315"/>
    <property type="project" value="UniProtKB"/>
</dbReference>
<dbReference type="GO" id="GO:0006879">
    <property type="term" value="P:intracellular iron ion homeostasis"/>
    <property type="evidence" value="ECO:0000303"/>
    <property type="project" value="ComplexPortal"/>
</dbReference>
<dbReference type="GO" id="GO:0044718">
    <property type="term" value="P:siderophore transmembrane transport"/>
    <property type="evidence" value="ECO:0000315"/>
    <property type="project" value="UniProtKB"/>
</dbReference>
<dbReference type="GO" id="GO:0033214">
    <property type="term" value="P:siderophore-dependent iron import into cell"/>
    <property type="evidence" value="ECO:0000318"/>
    <property type="project" value="GO_Central"/>
</dbReference>
<dbReference type="CDD" id="cd01347">
    <property type="entry name" value="ligand_gated_channel"/>
    <property type="match status" value="1"/>
</dbReference>
<dbReference type="FunFam" id="2.170.130.10:FF:000006">
    <property type="entry name" value="FhuE outer membrane receptor"/>
    <property type="match status" value="1"/>
</dbReference>
<dbReference type="FunFam" id="2.40.170.20:FF:000004">
    <property type="entry name" value="FhuE outer membrane receptor"/>
    <property type="match status" value="1"/>
</dbReference>
<dbReference type="Gene3D" id="2.40.170.20">
    <property type="entry name" value="TonB-dependent receptor, beta-barrel domain"/>
    <property type="match status" value="1"/>
</dbReference>
<dbReference type="Gene3D" id="2.170.130.10">
    <property type="entry name" value="TonB-dependent receptor, plug domain"/>
    <property type="match status" value="1"/>
</dbReference>
<dbReference type="InterPro" id="IPR012910">
    <property type="entry name" value="Plug_dom"/>
</dbReference>
<dbReference type="InterPro" id="IPR037066">
    <property type="entry name" value="Plug_dom_sf"/>
</dbReference>
<dbReference type="InterPro" id="IPR039426">
    <property type="entry name" value="TonB-dep_rcpt-like"/>
</dbReference>
<dbReference type="InterPro" id="IPR000531">
    <property type="entry name" value="TonB-dep_rcpt_b-brl"/>
</dbReference>
<dbReference type="InterPro" id="IPR010916">
    <property type="entry name" value="TonB_box_CS"/>
</dbReference>
<dbReference type="InterPro" id="IPR036942">
    <property type="entry name" value="TonB_rcpt_b-brl_sf"/>
</dbReference>
<dbReference type="InterPro" id="IPR010917">
    <property type="entry name" value="TonB_rcpt_CS"/>
</dbReference>
<dbReference type="InterPro" id="IPR010105">
    <property type="entry name" value="TonB_sidphr_rcpt"/>
</dbReference>
<dbReference type="NCBIfam" id="NF007447">
    <property type="entry name" value="PRK10003.1"/>
    <property type="match status" value="1"/>
</dbReference>
<dbReference type="NCBIfam" id="TIGR01783">
    <property type="entry name" value="TonB-siderophor"/>
    <property type="match status" value="1"/>
</dbReference>
<dbReference type="PANTHER" id="PTHR32552">
    <property type="entry name" value="FERRICHROME IRON RECEPTOR-RELATED"/>
    <property type="match status" value="1"/>
</dbReference>
<dbReference type="PANTHER" id="PTHR32552:SF74">
    <property type="entry name" value="HYDROXAMATE SIDEROPHORE RECEPTOR FHUE"/>
    <property type="match status" value="1"/>
</dbReference>
<dbReference type="Pfam" id="PF07715">
    <property type="entry name" value="Plug"/>
    <property type="match status" value="1"/>
</dbReference>
<dbReference type="Pfam" id="PF00593">
    <property type="entry name" value="TonB_dep_Rec_b-barrel"/>
    <property type="match status" value="1"/>
</dbReference>
<dbReference type="SUPFAM" id="SSF56935">
    <property type="entry name" value="Porins"/>
    <property type="match status" value="1"/>
</dbReference>
<dbReference type="PROSITE" id="PS00430">
    <property type="entry name" value="TONB_DEPENDENT_REC_1"/>
    <property type="match status" value="1"/>
</dbReference>
<dbReference type="PROSITE" id="PS01156">
    <property type="entry name" value="TONB_DEPENDENT_REC_2"/>
    <property type="match status" value="1"/>
</dbReference>
<dbReference type="PROSITE" id="PS52016">
    <property type="entry name" value="TONB_DEPENDENT_REC_3"/>
    <property type="match status" value="1"/>
</dbReference>
<proteinExistence type="evidence at protein level"/>
<sequence length="729" mass="81233">MLSTQFNRDNQYQAITKPSLLAGCIALALLPSAAFAAPATEETVIVEGSATAPDDGENDYSVTSTSAGTKMQMTQRDIPQSVTIVSQQRMEDQQLQTLGEVMENTLGISKSQADSDRALYYSRGFQIDNYMVDGIPTYFESRWNLGDALSDMALFERVEVVRGATGLMTGTGNPSAAINMVRKHATSREFKGDVSAEYGSWNKERYVADLQSPLTEDGKIRARIVGGYQNNDSWLDRYNSEKTFFSGIVDADLGDLTTLSAGYEYQRIDVNSPTWGGLPRWNTDGSSNSYDRARSTAPDWAYNDKEINKVFMTLKQQFADTWQATLNATHSEVEFDSKMMYVDAYVNKADGMLVGPYSNYGPGFDYVGGTGWNSGKRKVDALDLFADGSYELFGRQHNLMFGGSYSKQNNRYFSSWANIFPDEIGSFYNFNGNFPQTDWSPQSLAQDDTTHMKSLYAATRVTLADPLHLILGARYTNWRVDTLTYSMEKNHTTPYAGLVFDINDNWSTYASYTSIFQPQNDRDSSGKYLAPITGNNYELGLKSDWMNSRLTTTLAIFRIEQDNVAQSTGTPIPGSNGETAYKAVDGTVSKGVEFELNGAITDNWQLTFGATRYIAEDNEGNAVNPNLPRTTVKMFTSYRLPVMPELTVGGGVNWQNRVYTDTVTPYGTFRAEQGSYALVDLFTRYQVTKNFSLQGNVNNLFDKTYDTNVEGSIVYGTPRNFSITGTYQF</sequence>
<organism>
    <name type="scientific">Escherichia coli (strain K12)</name>
    <dbReference type="NCBI Taxonomy" id="83333"/>
    <lineage>
        <taxon>Bacteria</taxon>
        <taxon>Pseudomonadati</taxon>
        <taxon>Pseudomonadota</taxon>
        <taxon>Gammaproteobacteria</taxon>
        <taxon>Enterobacterales</taxon>
        <taxon>Enterobacteriaceae</taxon>
        <taxon>Escherichia</taxon>
    </lineage>
</organism>
<evidence type="ECO:0000255" key="1">
    <source>
        <dbReference type="PROSITE-ProRule" id="PRU01360"/>
    </source>
</evidence>
<evidence type="ECO:0000256" key="2">
    <source>
        <dbReference type="SAM" id="MobiDB-lite"/>
    </source>
</evidence>
<evidence type="ECO:0000269" key="3">
    <source>
    </source>
</evidence>
<evidence type="ECO:0000269" key="4">
    <source>
    </source>
</evidence>
<evidence type="ECO:0000269" key="5">
    <source>
    </source>
</evidence>
<evidence type="ECO:0000269" key="6">
    <source>
    </source>
</evidence>
<evidence type="ECO:0000303" key="7">
    <source>
    </source>
</evidence>
<evidence type="ECO:0000303" key="8">
    <source>
    </source>
</evidence>
<evidence type="ECO:0000303" key="9">
    <source>
    </source>
</evidence>
<evidence type="ECO:0000305" key="10"/>
<evidence type="ECO:0000305" key="11">
    <source>
    </source>
</evidence>
<evidence type="ECO:0007744" key="12">
    <source>
        <dbReference type="PDB" id="6E4V"/>
    </source>
</evidence>
<evidence type="ECO:0007829" key="13">
    <source>
        <dbReference type="PDB" id="6E4V"/>
    </source>
</evidence>
<name>FHUE_ECOLI</name>
<comment type="function">
    <text evidence="6">Involved in the active transport across the outer membrane of iron complexed with linear hydroxamate siderophores coprogen, rhodotorulic acid and ferrioxamine B. Binds Fe-coprogen with high affinity, rhodotorulic acid to a lesser extent, and weakly to ferrioxamine B. Selective for planar siderophores. Does not use cyclic siderophores ferrichrome nor ferrioxamine E as substrates.</text>
</comment>
<comment type="subcellular location">
    <subcellularLocation>
        <location evidence="1 11">Cell outer membrane</location>
        <topology evidence="1">Multi-pass membrane protein</topology>
    </subcellularLocation>
</comment>
<comment type="induction">
    <text evidence="3">For induction, the TonB and the ExbB proteins have to be active. Induced by hydroxyurea (PubMed:20005847).</text>
</comment>
<comment type="disruption phenotype">
    <text evidence="6">Simultaneous deletion of TonB-depedent transporter (TBDT) receptor genes fhuE, fhuA, fecA, cirA, fepA and fiu results in loss of growth on solid agar using Fe-coprogen, Fe-rhodotorulic acid or ferrioxamine B as the sole iron source.</text>
</comment>
<comment type="similarity">
    <text evidence="10">Belongs to the TonB-dependent receptor family.</text>
</comment>
<protein>
    <recommendedName>
        <fullName evidence="10">Hydroxamate siderophore receptor FhuE</fullName>
    </recommendedName>
    <alternativeName>
        <fullName evidence="10">Ferric iron uptake protein</fullName>
    </alternativeName>
    <alternativeName>
        <fullName evidence="8">Ferric-coprogen receptor FhuE</fullName>
    </alternativeName>
    <alternativeName>
        <fullName evidence="7">Outer-membrane receptor for Fe(III)-coprogen, Fe(III)-ferrioxamine B and Fe(III)-rhodotrulic acid</fullName>
    </alternativeName>
    <alternativeName>
        <fullName evidence="9">TonB-dependent transporter receptor FhuE</fullName>
        <shortName evidence="9">TBDT receptor FhuE</shortName>
    </alternativeName>
</protein>
<reference key="1">
    <citation type="journal article" date="1990" name="Mol. Microbiol.">
        <title>Sequence of the fhuE outer-membrane receptor gene of Escherichia coli K12 and properties of mutants.</title>
        <authorList>
            <person name="Sauer U."/>
            <person name="Hantke K."/>
            <person name="Braun V."/>
        </authorList>
    </citation>
    <scope>NUCLEOTIDE SEQUENCE [GENOMIC DNA]</scope>
    <scope>MUTAGENESIS OF VAL-44; VAL-46 AND GLY-163</scope>
    <source>
        <strain>K12</strain>
    </source>
</reference>
<reference key="2">
    <citation type="journal article" date="1996" name="DNA Res.">
        <title>A 718-kb DNA sequence of the Escherichia coli K-12 genome corresponding to the 12.7-28.0 min region on the linkage map.</title>
        <authorList>
            <person name="Oshima T."/>
            <person name="Aiba H."/>
            <person name="Baba T."/>
            <person name="Fujita K."/>
            <person name="Hayashi K."/>
            <person name="Honjo A."/>
            <person name="Ikemoto K."/>
            <person name="Inada T."/>
            <person name="Itoh T."/>
            <person name="Kajihara M."/>
            <person name="Kanai K."/>
            <person name="Kashimoto K."/>
            <person name="Kimura S."/>
            <person name="Kitagawa M."/>
            <person name="Makino K."/>
            <person name="Masuda S."/>
            <person name="Miki T."/>
            <person name="Mizobuchi K."/>
            <person name="Mori H."/>
            <person name="Motomura K."/>
            <person name="Nakamura Y."/>
            <person name="Nashimoto H."/>
            <person name="Nishio Y."/>
            <person name="Saito N."/>
            <person name="Sampei G."/>
            <person name="Seki Y."/>
            <person name="Tagami H."/>
            <person name="Takemoto K."/>
            <person name="Wada C."/>
            <person name="Yamamoto Y."/>
            <person name="Yano M."/>
            <person name="Horiuchi T."/>
        </authorList>
    </citation>
    <scope>NUCLEOTIDE SEQUENCE [LARGE SCALE GENOMIC DNA]</scope>
    <source>
        <strain>K12 / W3110 / ATCC 27325 / DSM 5911</strain>
    </source>
</reference>
<reference key="3">
    <citation type="journal article" date="1997" name="Science">
        <title>The complete genome sequence of Escherichia coli K-12.</title>
        <authorList>
            <person name="Blattner F.R."/>
            <person name="Plunkett G. III"/>
            <person name="Bloch C.A."/>
            <person name="Perna N.T."/>
            <person name="Burland V."/>
            <person name="Riley M."/>
            <person name="Collado-Vides J."/>
            <person name="Glasner J.D."/>
            <person name="Rode C.K."/>
            <person name="Mayhew G.F."/>
            <person name="Gregor J."/>
            <person name="Davis N.W."/>
            <person name="Kirkpatrick H.A."/>
            <person name="Goeden M.A."/>
            <person name="Rose D.J."/>
            <person name="Mau B."/>
            <person name="Shao Y."/>
        </authorList>
    </citation>
    <scope>NUCLEOTIDE SEQUENCE [LARGE SCALE GENOMIC DNA]</scope>
    <source>
        <strain>K12 / MG1655 / ATCC 47076</strain>
    </source>
</reference>
<reference key="4">
    <citation type="journal article" date="2006" name="Mol. Syst. Biol.">
        <title>Highly accurate genome sequences of Escherichia coli K-12 strains MG1655 and W3110.</title>
        <authorList>
            <person name="Hayashi K."/>
            <person name="Morooka N."/>
            <person name="Yamamoto Y."/>
            <person name="Fujita K."/>
            <person name="Isono K."/>
            <person name="Choi S."/>
            <person name="Ohtsubo E."/>
            <person name="Baba T."/>
            <person name="Wanner B.L."/>
            <person name="Mori H."/>
            <person name="Horiuchi T."/>
        </authorList>
    </citation>
    <scope>NUCLEOTIDE SEQUENCE [LARGE SCALE GENOMIC DNA]</scope>
    <source>
        <strain>K12 / W3110 / ATCC 27325 / DSM 5911</strain>
    </source>
</reference>
<reference key="5">
    <citation type="journal article" date="1987" name="J. Bacteriol.">
        <title>Ferric-coprogen receptor FhuE of Escherichia coli: processing and sequence common to all TonB-dependent outer membrane receptor proteins.</title>
        <authorList>
            <person name="Sauer M."/>
            <person name="Hantke K."/>
            <person name="Braun V."/>
        </authorList>
    </citation>
    <scope>PROTEIN SEQUENCE OF 37-50</scope>
    <source>
        <strain>K12</strain>
    </source>
</reference>
<reference key="6">
    <citation type="journal article" date="2009" name="Mol. Cell">
        <title>Hydroxyurea induces hydroxyl radical-mediated cell death in Escherichia coli.</title>
        <authorList>
            <person name="Davies B.W."/>
            <person name="Kohanski M.A."/>
            <person name="Simmons L.A."/>
            <person name="Winkler J.A."/>
            <person name="Collins J.J."/>
            <person name="Walker G.C."/>
        </authorList>
    </citation>
    <scope>INDUCTION BY HYDROXYUREA</scope>
    <source>
        <strain>K12 / MC4100 / ATCC 35695 / DSM 6574</strain>
    </source>
</reference>
<reference key="7">
    <citation type="journal article" date="2019" name="IUCrJ">
        <title>Determination of the molecular basis for coprogen import by Gram-negative bacteria.</title>
        <authorList>
            <person name="Grinter R."/>
            <person name="Lithgow T."/>
        </authorList>
    </citation>
    <scope>X-RAY CRYSTALLOGRAPHY (2.0 ANGSTROMS) OF 37-729 IN COMPLEX WITH COPROGEN</scope>
    <scope>FUNCTION</scope>
    <scope>SUBSTRATE SPECIFICITY</scope>
    <scope>SUBCELLULAR LOCATION</scope>
    <scope>DISRUPTION PHENOTYPE</scope>
    <scope>MUTAGENESIS OF ARG-117; SER-141; ARG-142; TRP-143; TRP-275; ASN-303; SER-337; TYR-341; ASP-343; ASN-373 AND TRP-416</scope>
</reference>
<accession>P16869</accession>
<accession>P77292</accession>
<keyword id="KW-0002">3D-structure</keyword>
<keyword id="KW-0998">Cell outer membrane</keyword>
<keyword id="KW-0903">Direct protein sequencing</keyword>
<keyword id="KW-0406">Ion transport</keyword>
<keyword id="KW-0408">Iron</keyword>
<keyword id="KW-0410">Iron transport</keyword>
<keyword id="KW-0472">Membrane</keyword>
<keyword id="KW-0675">Receptor</keyword>
<keyword id="KW-1185">Reference proteome</keyword>
<keyword id="KW-0732">Signal</keyword>
<keyword id="KW-0798">TonB box</keyword>
<keyword id="KW-0812">Transmembrane</keyword>
<keyword id="KW-1134">Transmembrane beta strand</keyword>
<keyword id="KW-0813">Transport</keyword>
<feature type="signal peptide" evidence="5">
    <location>
        <begin position="1"/>
        <end position="36"/>
    </location>
</feature>
<feature type="chain" id="PRO_0000034749" description="Hydroxamate siderophore receptor FhuE">
    <location>
        <begin position="37"/>
        <end position="729"/>
    </location>
</feature>
<feature type="domain" description="TBDR plug" evidence="1">
    <location>
        <begin position="74"/>
        <end position="183"/>
    </location>
</feature>
<feature type="domain" description="TBDR beta-barrel" evidence="1">
    <location>
        <begin position="189"/>
        <end position="729"/>
    </location>
</feature>
<feature type="region of interest" description="Disordered" evidence="2">
    <location>
        <begin position="48"/>
        <end position="72"/>
    </location>
</feature>
<feature type="short sequence motif" description="TonB box">
    <location>
        <begin position="42"/>
        <end position="49"/>
    </location>
</feature>
<feature type="short sequence motif" description="TonB C-terminal box">
    <location>
        <begin position="712"/>
        <end position="729"/>
    </location>
</feature>
<feature type="compositionally biased region" description="Polar residues" evidence="2">
    <location>
        <begin position="60"/>
        <end position="72"/>
    </location>
</feature>
<feature type="binding site" evidence="6 12">
    <location>
        <position position="117"/>
    </location>
    <ligand>
        <name>Fe(III)-coprogen</name>
        <dbReference type="ChEBI" id="CHEBI:83101"/>
    </ligand>
</feature>
<feature type="binding site" evidence="6 12">
    <location>
        <position position="142"/>
    </location>
    <ligand>
        <name>Fe(III)-coprogen</name>
        <dbReference type="ChEBI" id="CHEBI:83101"/>
    </ligand>
</feature>
<feature type="binding site" evidence="6 12">
    <location>
        <position position="275"/>
    </location>
    <ligand>
        <name>Fe(III)-coprogen</name>
        <dbReference type="ChEBI" id="CHEBI:83101"/>
    </ligand>
</feature>
<feature type="binding site" evidence="6 12">
    <location>
        <position position="357"/>
    </location>
    <ligand>
        <name>Fe(III)-coprogen</name>
        <dbReference type="ChEBI" id="CHEBI:83101"/>
    </ligand>
</feature>
<feature type="binding site" evidence="6 12">
    <location>
        <position position="373"/>
    </location>
    <ligand>
        <name>Fe(III)-coprogen</name>
        <dbReference type="ChEBI" id="CHEBI:83101"/>
    </ligand>
</feature>
<feature type="binding site" evidence="6 12">
    <location>
        <position position="416"/>
    </location>
    <ligand>
        <name>Fe(III)-coprogen</name>
        <dbReference type="ChEBI" id="CHEBI:83101"/>
    </ligand>
</feature>
<feature type="mutagenesis site" description="Abolishes transport activity." evidence="4">
    <original>V</original>
    <variation>P</variation>
    <location>
        <position position="44"/>
    </location>
</feature>
<feature type="mutagenesis site" description="Abolishes transport activity." evidence="4">
    <original>V</original>
    <variation>P</variation>
    <location>
        <position position="46"/>
    </location>
</feature>
<feature type="mutagenesis site" description="No effect on growth, almost no growth, and no growth on solid agar with Fe-coprogen, Fe-rhodotorulic acid, and ferrioxamine B as the sole iron source, respectively; when associated with deletion of fhuA, fecA, cirA, fepA and fiu. Reduced growth, no growth and no growth on solid agar with Fe-coprogen, Fe-rhodotorulic acid, and ferrioxamine B as the sole iron source, respectively; when associated with A-142 and deletion of fhuA, fecA, cirA, fepA and fiu. No growth on solid agar with Fe-coprogen, Fe-rhodotorulic acid or ferrioxamine B as the sole iron sources; when associated with A-275 and deletion of fhuA, fecA, cirA, fepA and fiu." evidence="6">
    <original>R</original>
    <variation>A</variation>
    <location>
        <position position="117"/>
    </location>
</feature>
<feature type="mutagenesis site" description="Minor effect on growth, no effect on growth, and no effect on growth on solid agar with Fe-coprogen, Fe-rhodotorulic acid, and ferrioxamine B as the sole iron source, respectively; when associated with deletion of fhuA, fecA, cirA, fepA and fiu.">
    <original>S</original>
    <variation>A</variation>
    <location>
        <position position="141"/>
    </location>
</feature>
<feature type="mutagenesis site" description="Minor effect on growth, slightly reduced growth, and significantly reduced growth on solid agar with Fe-coprogen, Fe-rhodotorulic acid, and ferrioxamine B as the sole iron source, respectively; when associated with deletion of fhuA, fecA, cirA, fepA and fiu. Reduced growth, no growth and no growth on solid agar with Fe-coprogen, Fe-rhodotorulic acid, and ferrioxamine B as the sole iron source, respectively; when associated with A-117 or A-275 and deletion of fhuA, fecA, cirA, fepA and fiu.">
    <original>R</original>
    <variation>A</variation>
    <location>
        <position position="142"/>
    </location>
</feature>
<feature type="mutagenesis site" description="Minor effect on growth, no growth, and no growth on solid agar with Fe-coprogen, Fe-rhodotorulic acid, and ferrioxamine B as the sole iron source, respectively; when associated with deletion of fhuA, fecA, cirA, fepA and fiu.">
    <original>W</original>
    <variation>A</variation>
    <location>
        <position position="143"/>
    </location>
</feature>
<feature type="mutagenesis site" description="Impaired transport and growth." evidence="4">
    <original>G</original>
    <variation>A</variation>
    <variation>V</variation>
    <variation>N</variation>
    <variation>D</variation>
    <variation>H</variation>
    <location>
        <position position="163"/>
    </location>
</feature>
<feature type="mutagenesis site" description="Minor effect on growth, no growth, and no growth on solid agar with Fe-coprogen, Fe-rhodotorulic acid, and ferrioxamine B as the sole iron source, respectively; when associated with deletion of fhuA, fecA, cirA, fepA and fiu. No growth on solid agar with Fe-coprogen, Fe-rhodotorulic acid or ferrioxamine B as the sole iron sources; when associated with A-117 and deletion of fhuA, fecA, cirA, fepA and fiu. Reduced growth, no growth and no growth on solid agar with Fe-coprogen, Fe-rhodotorulic acid, and ferrioxamine B as the sole iron source, respectively; when associated with A-142 and deletion of fhuA, fecA, cirA, fepA and fiu.">
    <original>W</original>
    <variation>A</variation>
    <location>
        <position position="275"/>
    </location>
</feature>
<feature type="mutagenesis site" description="Minor effect on growth, minor effect on growth, and reduced growth on solid agar with Fe-coprogen, Fe-rhodotorulic acid, and ferrioxamine B as the sole iron source, respectively; when associated with deletion of fhuA, fecA, cirA, fepA and fiu.">
    <original>N</original>
    <variation>A</variation>
    <location>
        <position position="303"/>
    </location>
</feature>
<feature type="mutagenesis site" description="Minor effect on growth, minor effect on growth, and no growth on solid agar with Fe-coprogen, Fe-rhodotorulic acid, and ferrioxamine B as the sole iron source, respectively; when associated with deletion of fhuA, fecA, cirA, fepA and fiu.">
    <original>S</original>
    <variation>A</variation>
    <location>
        <position position="337"/>
    </location>
</feature>
<feature type="mutagenesis site" description="Minor effect on growth, reduced growth, and no growth on solid agar with Fe-coprogen, Fe-rhodotorulic acid, and ferrioxamine B as the sole iron source, respectively; when associated with deletion of fhuA, fecA, cirA, fepA and fiu.">
    <original>Y</original>
    <variation>A</variation>
    <location>
        <position position="341"/>
    </location>
</feature>
<feature type="mutagenesis site" description="Minor effect on growth, minor effect on growth, and no growth on solid agar with Fe-coprogen, Fe-rhodotorulic acid, and ferrioxamine B as the sole iron source, respectively; when associated with deletion of fhuA, fecA, cirA, fepA and fiu.">
    <original>D</original>
    <variation>A</variation>
    <location>
        <position position="343"/>
    </location>
</feature>
<feature type="mutagenesis site" description="Minor effect on growth, significantly reduced growth, and significantly increased growth on solid agar with Fe-coprogen, Fe-rhodotorulic acid, and ferrioxamine B as the sole iron source, respectively; when associated with deletion of fhuA, fecA, cirA, fepA and fiu.">
    <original>N</original>
    <variation>A</variation>
    <location>
        <position position="373"/>
    </location>
</feature>
<feature type="mutagenesis site" description="Minor effect on growth, no effect on growth, and no effect on growth on solid agar with Fe-coprogen, Fe-rhodotorulic acid, and ferrioxamine B as the sole iron source, respectively; when associated with deletion of fhuA, fecA, cirA, fepA and fiu.">
    <original>W</original>
    <variation>A</variation>
    <location>
        <position position="416"/>
    </location>
</feature>
<feature type="sequence conflict" description="In Ref. 1; CAA35616." evidence="10" ref="1">
    <original>G</original>
    <variation>C</variation>
    <location>
        <position position="363"/>
    </location>
</feature>
<feature type="turn" evidence="13">
    <location>
        <begin position="67"/>
        <end position="69"/>
    </location>
</feature>
<feature type="helix" evidence="13">
    <location>
        <begin position="75"/>
        <end position="77"/>
    </location>
</feature>
<feature type="strand" evidence="13">
    <location>
        <begin position="79"/>
        <end position="85"/>
    </location>
</feature>
<feature type="helix" evidence="13">
    <location>
        <begin position="87"/>
        <end position="93"/>
    </location>
</feature>
<feature type="helix" evidence="13">
    <location>
        <begin position="98"/>
        <end position="103"/>
    </location>
</feature>
<feature type="strand" evidence="13">
    <location>
        <begin position="109"/>
        <end position="114"/>
    </location>
</feature>
<feature type="strand" evidence="13">
    <location>
        <begin position="117"/>
        <end position="122"/>
    </location>
</feature>
<feature type="strand" evidence="13">
    <location>
        <begin position="129"/>
        <end position="132"/>
    </location>
</feature>
<feature type="strand" evidence="13">
    <location>
        <begin position="135"/>
        <end position="138"/>
    </location>
</feature>
<feature type="helix" evidence="13">
    <location>
        <begin position="147"/>
        <end position="149"/>
    </location>
</feature>
<feature type="helix" evidence="13">
    <location>
        <begin position="152"/>
        <end position="154"/>
    </location>
</feature>
<feature type="strand" evidence="13">
    <location>
        <begin position="155"/>
        <end position="163"/>
    </location>
</feature>
<feature type="turn" evidence="13">
    <location>
        <begin position="166"/>
        <end position="168"/>
    </location>
</feature>
<feature type="strand" evidence="13">
    <location>
        <begin position="174"/>
        <end position="182"/>
    </location>
</feature>
<feature type="strand" evidence="13">
    <location>
        <begin position="191"/>
        <end position="199"/>
    </location>
</feature>
<feature type="turn" evidence="13">
    <location>
        <begin position="200"/>
        <end position="202"/>
    </location>
</feature>
<feature type="strand" evidence="13">
    <location>
        <begin position="203"/>
        <end position="215"/>
    </location>
</feature>
<feature type="strand" evidence="13">
    <location>
        <begin position="220"/>
        <end position="232"/>
    </location>
</feature>
<feature type="strand" evidence="13">
    <location>
        <begin position="239"/>
        <end position="253"/>
    </location>
</feature>
<feature type="turn" evidence="13">
    <location>
        <begin position="254"/>
        <end position="256"/>
    </location>
</feature>
<feature type="strand" evidence="13">
    <location>
        <begin position="257"/>
        <end position="272"/>
    </location>
</feature>
<feature type="strand" evidence="13">
    <location>
        <begin position="302"/>
        <end position="319"/>
    </location>
</feature>
<feature type="strand" evidence="13">
    <location>
        <begin position="322"/>
        <end position="342"/>
    </location>
</feature>
<feature type="turn" evidence="13">
    <location>
        <begin position="348"/>
        <end position="350"/>
    </location>
</feature>
<feature type="helix" evidence="13">
    <location>
        <begin position="358"/>
        <end position="360"/>
    </location>
</feature>
<feature type="helix" evidence="13">
    <location>
        <begin position="362"/>
        <end position="364"/>
    </location>
</feature>
<feature type="strand" evidence="13">
    <location>
        <begin position="368"/>
        <end position="392"/>
    </location>
</feature>
<feature type="strand" evidence="13">
    <location>
        <begin position="395"/>
        <end position="419"/>
    </location>
</feature>
<feature type="helix" evidence="13">
    <location>
        <begin position="421"/>
        <end position="424"/>
    </location>
</feature>
<feature type="helix" evidence="13">
    <location>
        <begin position="427"/>
        <end position="429"/>
    </location>
</feature>
<feature type="strand" evidence="13">
    <location>
        <begin position="443"/>
        <end position="464"/>
    </location>
</feature>
<feature type="strand" evidence="13">
    <location>
        <begin position="467"/>
        <end position="481"/>
    </location>
</feature>
<feature type="strand" evidence="13">
    <location>
        <begin position="486"/>
        <end position="501"/>
    </location>
</feature>
<feature type="strand" evidence="13">
    <location>
        <begin position="503"/>
        <end position="517"/>
    </location>
</feature>
<feature type="strand" evidence="13">
    <location>
        <begin position="532"/>
        <end position="545"/>
    </location>
</feature>
<feature type="turn" evidence="13">
    <location>
        <begin position="546"/>
        <end position="549"/>
    </location>
</feature>
<feature type="strand" evidence="13">
    <location>
        <begin position="550"/>
        <end position="571"/>
    </location>
</feature>
<feature type="strand" evidence="13">
    <location>
        <begin position="575"/>
        <end position="577"/>
    </location>
</feature>
<feature type="strand" evidence="13">
    <location>
        <begin position="579"/>
        <end position="584"/>
    </location>
</feature>
<feature type="strand" evidence="13">
    <location>
        <begin position="588"/>
        <end position="601"/>
    </location>
</feature>
<feature type="strand" evidence="13">
    <location>
        <begin position="604"/>
        <end position="616"/>
    </location>
</feature>
<feature type="strand" evidence="13">
    <location>
        <begin position="622"/>
        <end position="624"/>
    </location>
</feature>
<feature type="strand" evidence="13">
    <location>
        <begin position="629"/>
        <end position="639"/>
    </location>
</feature>
<feature type="strand" evidence="13">
    <location>
        <begin position="646"/>
        <end position="655"/>
    </location>
</feature>
<feature type="strand" evidence="13">
    <location>
        <begin position="658"/>
        <end position="664"/>
    </location>
</feature>
<feature type="strand" evidence="13">
    <location>
        <begin position="667"/>
        <end position="673"/>
    </location>
</feature>
<feature type="strand" evidence="13">
    <location>
        <begin position="676"/>
        <end position="686"/>
    </location>
</feature>
<feature type="strand" evidence="13">
    <location>
        <begin position="688"/>
        <end position="699"/>
    </location>
</feature>
<feature type="strand" evidence="13">
    <location>
        <begin position="711"/>
        <end position="713"/>
    </location>
</feature>
<feature type="strand" evidence="13">
    <location>
        <begin position="720"/>
        <end position="728"/>
    </location>
</feature>
<gene>
    <name evidence="7" type="primary">fhuE</name>
    <name type="ordered locus">b1102</name>
    <name type="ordered locus">JW1088</name>
</gene>